<name>PCP_YERPS</name>
<protein>
    <recommendedName>
        <fullName evidence="1">Pyrrolidone-carboxylate peptidase</fullName>
        <ecNumber evidence="1">3.4.19.3</ecNumber>
    </recommendedName>
    <alternativeName>
        <fullName evidence="1">5-oxoprolyl-peptidase</fullName>
    </alternativeName>
    <alternativeName>
        <fullName evidence="1">Pyroglutamyl-peptidase I</fullName>
        <shortName evidence="1">PGP-I</shortName>
        <shortName evidence="1">Pyrase</shortName>
    </alternativeName>
</protein>
<reference key="1">
    <citation type="journal article" date="2004" name="Proc. Natl. Acad. Sci. U.S.A.">
        <title>Insights into the evolution of Yersinia pestis through whole-genome comparison with Yersinia pseudotuberculosis.</title>
        <authorList>
            <person name="Chain P.S.G."/>
            <person name="Carniel E."/>
            <person name="Larimer F.W."/>
            <person name="Lamerdin J."/>
            <person name="Stoutland P.O."/>
            <person name="Regala W.M."/>
            <person name="Georgescu A.M."/>
            <person name="Vergez L.M."/>
            <person name="Land M.L."/>
            <person name="Motin V.L."/>
            <person name="Brubaker R.R."/>
            <person name="Fowler J."/>
            <person name="Hinnebusch J."/>
            <person name="Marceau M."/>
            <person name="Medigue C."/>
            <person name="Simonet M."/>
            <person name="Chenal-Francisque V."/>
            <person name="Souza B."/>
            <person name="Dacheux D."/>
            <person name="Elliott J.M."/>
            <person name="Derbise A."/>
            <person name="Hauser L.J."/>
            <person name="Garcia E."/>
        </authorList>
    </citation>
    <scope>NUCLEOTIDE SEQUENCE [LARGE SCALE GENOMIC DNA]</scope>
    <source>
        <strain>IP32953</strain>
    </source>
</reference>
<accession>Q667T6</accession>
<sequence length="215" mass="23142">MRRVLITGFEPFGGERINPSWEVVKQMNDLMMGGVRIVARQLPCAFGEALTALNTAIDDVQPVLVLAIGQAGGRADITIERVAINVDDARIPDNLGNQPVDQPIIQEGPAAYFTRLPIKAMVQGIREAGIPASVSQTAGTYVCNHVMYGLLHRLNQFNNEVKGGFIHIPYLPEQAVDHPGAPSMSAQSVLVALELAISIALQIEHDLHITGGAVH</sequence>
<dbReference type="EC" id="3.4.19.3" evidence="1"/>
<dbReference type="EMBL" id="BX936398">
    <property type="protein sequence ID" value="CAH22143.1"/>
    <property type="molecule type" value="Genomic_DNA"/>
</dbReference>
<dbReference type="RefSeq" id="WP_002209662.1">
    <property type="nucleotide sequence ID" value="NZ_CP009712.1"/>
</dbReference>
<dbReference type="SMR" id="Q667T6"/>
<dbReference type="MEROPS" id="C15.001"/>
<dbReference type="GeneID" id="57975988"/>
<dbReference type="KEGG" id="ypo:BZ17_3724"/>
<dbReference type="KEGG" id="yps:YPTB2905"/>
<dbReference type="PATRIC" id="fig|273123.14.peg.3907"/>
<dbReference type="Proteomes" id="UP000001011">
    <property type="component" value="Chromosome"/>
</dbReference>
<dbReference type="GO" id="GO:0005829">
    <property type="term" value="C:cytosol"/>
    <property type="evidence" value="ECO:0007669"/>
    <property type="project" value="InterPro"/>
</dbReference>
<dbReference type="GO" id="GO:0016920">
    <property type="term" value="F:pyroglutamyl-peptidase activity"/>
    <property type="evidence" value="ECO:0007669"/>
    <property type="project" value="UniProtKB-UniRule"/>
</dbReference>
<dbReference type="GO" id="GO:0006508">
    <property type="term" value="P:proteolysis"/>
    <property type="evidence" value="ECO:0007669"/>
    <property type="project" value="UniProtKB-KW"/>
</dbReference>
<dbReference type="CDD" id="cd00501">
    <property type="entry name" value="Peptidase_C15"/>
    <property type="match status" value="1"/>
</dbReference>
<dbReference type="FunFam" id="3.40.630.20:FF:000001">
    <property type="entry name" value="Pyrrolidone-carboxylate peptidase"/>
    <property type="match status" value="1"/>
</dbReference>
<dbReference type="Gene3D" id="3.40.630.20">
    <property type="entry name" value="Peptidase C15, pyroglutamyl peptidase I-like"/>
    <property type="match status" value="1"/>
</dbReference>
<dbReference type="HAMAP" id="MF_00417">
    <property type="entry name" value="Pyrrolid_peptidase"/>
    <property type="match status" value="1"/>
</dbReference>
<dbReference type="InterPro" id="IPR000816">
    <property type="entry name" value="Peptidase_C15"/>
</dbReference>
<dbReference type="InterPro" id="IPR016125">
    <property type="entry name" value="Peptidase_C15-like"/>
</dbReference>
<dbReference type="InterPro" id="IPR036440">
    <property type="entry name" value="Peptidase_C15-like_sf"/>
</dbReference>
<dbReference type="InterPro" id="IPR029762">
    <property type="entry name" value="PGP-I_bact-type"/>
</dbReference>
<dbReference type="InterPro" id="IPR033694">
    <property type="entry name" value="PGPEP1_Cys_AS"/>
</dbReference>
<dbReference type="InterPro" id="IPR033693">
    <property type="entry name" value="PGPEP1_Glu_AS"/>
</dbReference>
<dbReference type="NCBIfam" id="NF009676">
    <property type="entry name" value="PRK13197.1"/>
    <property type="match status" value="1"/>
</dbReference>
<dbReference type="NCBIfam" id="TIGR00504">
    <property type="entry name" value="pyro_pdase"/>
    <property type="match status" value="1"/>
</dbReference>
<dbReference type="PANTHER" id="PTHR23402">
    <property type="entry name" value="PROTEASE FAMILY C15 PYROGLUTAMYL-PEPTIDASE I-RELATED"/>
    <property type="match status" value="1"/>
</dbReference>
<dbReference type="PANTHER" id="PTHR23402:SF1">
    <property type="entry name" value="PYROGLUTAMYL-PEPTIDASE I"/>
    <property type="match status" value="1"/>
</dbReference>
<dbReference type="Pfam" id="PF01470">
    <property type="entry name" value="Peptidase_C15"/>
    <property type="match status" value="1"/>
</dbReference>
<dbReference type="PIRSF" id="PIRSF015592">
    <property type="entry name" value="Prld-crbxl_pptds"/>
    <property type="match status" value="1"/>
</dbReference>
<dbReference type="PRINTS" id="PR00706">
    <property type="entry name" value="PYROGLUPTASE"/>
</dbReference>
<dbReference type="SUPFAM" id="SSF53182">
    <property type="entry name" value="Pyrrolidone carboxyl peptidase (pyroglutamate aminopeptidase)"/>
    <property type="match status" value="1"/>
</dbReference>
<dbReference type="PROSITE" id="PS01334">
    <property type="entry name" value="PYRASE_CYS"/>
    <property type="match status" value="1"/>
</dbReference>
<dbReference type="PROSITE" id="PS01333">
    <property type="entry name" value="PYRASE_GLU"/>
    <property type="match status" value="1"/>
</dbReference>
<gene>
    <name evidence="1" type="primary">pcp</name>
    <name type="ordered locus">YPTB2905</name>
</gene>
<keyword id="KW-0963">Cytoplasm</keyword>
<keyword id="KW-0378">Hydrolase</keyword>
<keyword id="KW-0645">Protease</keyword>
<keyword id="KW-0788">Thiol protease</keyword>
<proteinExistence type="inferred from homology"/>
<evidence type="ECO:0000255" key="1">
    <source>
        <dbReference type="HAMAP-Rule" id="MF_00417"/>
    </source>
</evidence>
<organism>
    <name type="scientific">Yersinia pseudotuberculosis serotype I (strain IP32953)</name>
    <dbReference type="NCBI Taxonomy" id="273123"/>
    <lineage>
        <taxon>Bacteria</taxon>
        <taxon>Pseudomonadati</taxon>
        <taxon>Pseudomonadota</taxon>
        <taxon>Gammaproteobacteria</taxon>
        <taxon>Enterobacterales</taxon>
        <taxon>Yersiniaceae</taxon>
        <taxon>Yersinia</taxon>
    </lineage>
</organism>
<feature type="chain" id="PRO_0000184753" description="Pyrrolidone-carboxylate peptidase">
    <location>
        <begin position="1"/>
        <end position="215"/>
    </location>
</feature>
<feature type="active site" evidence="1">
    <location>
        <position position="80"/>
    </location>
</feature>
<feature type="active site" evidence="1">
    <location>
        <position position="143"/>
    </location>
</feature>
<feature type="active site" evidence="1">
    <location>
        <position position="167"/>
    </location>
</feature>
<comment type="function">
    <text evidence="1">Removes 5-oxoproline from various penultimate amino acid residues except L-proline.</text>
</comment>
<comment type="catalytic activity">
    <reaction evidence="1">
        <text>Release of an N-terminal pyroglutamyl group from a polypeptide, the second amino acid generally not being Pro.</text>
        <dbReference type="EC" id="3.4.19.3"/>
    </reaction>
</comment>
<comment type="subunit">
    <text evidence="1">Homotetramer.</text>
</comment>
<comment type="subcellular location">
    <subcellularLocation>
        <location evidence="1">Cytoplasm</location>
    </subcellularLocation>
</comment>
<comment type="similarity">
    <text evidence="1">Belongs to the peptidase C15 family.</text>
</comment>